<accession>P33816</accession>
<dbReference type="EMBL" id="X69198">
    <property type="protein sequence ID" value="CAA49075.1"/>
    <property type="molecule type" value="Genomic_DNA"/>
</dbReference>
<dbReference type="EMBL" id="X67115">
    <property type="protein sequence ID" value="CAA47501.1"/>
    <property type="molecule type" value="Genomic_DNA"/>
</dbReference>
<dbReference type="EMBL" id="AY223492">
    <property type="protein sequence ID" value="AAP48877.1"/>
    <property type="molecule type" value="Genomic_DNA"/>
</dbReference>
<dbReference type="PIR" id="D36851">
    <property type="entry name" value="D36851"/>
</dbReference>
<dbReference type="RefSeq" id="NP_042178.1">
    <property type="nucleotide sequence ID" value="NC_001611.1"/>
</dbReference>
<dbReference type="SMR" id="P33816"/>
<dbReference type="GeneID" id="1486508"/>
<dbReference type="KEGG" id="vg:1486508"/>
<dbReference type="Proteomes" id="UP000002060">
    <property type="component" value="Segment"/>
</dbReference>
<dbReference type="GO" id="GO:0019031">
    <property type="term" value="C:viral envelope"/>
    <property type="evidence" value="ECO:0007669"/>
    <property type="project" value="InterPro"/>
</dbReference>
<dbReference type="GO" id="GO:0019064">
    <property type="term" value="P:fusion of virus membrane with host plasma membrane"/>
    <property type="evidence" value="ECO:0007669"/>
    <property type="project" value="InterPro"/>
</dbReference>
<dbReference type="Gene3D" id="1.20.5.110">
    <property type="match status" value="1"/>
</dbReference>
<dbReference type="InterPro" id="IPR003436">
    <property type="entry name" value="Chordopox_Fusion/A27"/>
</dbReference>
<dbReference type="Pfam" id="PF02346">
    <property type="entry name" value="Vac_Fusion"/>
    <property type="match status" value="1"/>
</dbReference>
<dbReference type="PRINTS" id="PR01847">
    <property type="entry name" value="VIRALFUSION"/>
</dbReference>
<organismHost>
    <name type="scientific">Homo sapiens</name>
    <name type="common">Human</name>
    <dbReference type="NCBI Taxonomy" id="9606"/>
</organismHost>
<proteinExistence type="inferred from homology"/>
<keyword id="KW-0175">Coiled coil</keyword>
<keyword id="KW-1015">Disulfide bond</keyword>
<keyword id="KW-0597">Phosphoprotein</keyword>
<keyword id="KW-1185">Reference proteome</keyword>
<keyword id="KW-0946">Virion</keyword>
<feature type="chain" id="PRO_0000099214" description="Protein OPG154">
    <location>
        <begin position="1"/>
        <end position="110"/>
    </location>
</feature>
<feature type="disulfide bond" description="Interchain (with C-441 in A26)" evidence="1">
    <location>
        <position position="71"/>
    </location>
</feature>
<feature type="disulfide bond" description="Interchain (with C-442 in A26)" evidence="1">
    <location>
        <position position="72"/>
    </location>
</feature>
<reference key="1">
    <citation type="journal article" date="1991" name="Dokl. Akad. Nauk SSSR">
        <title>Creation of a clone library of fragments from the natural variola virus and study of the structural and functional organization of viral genes from a circle of hosts.</title>
        <authorList>
            <person name="Shchelkunov S.N."/>
            <person name="Marennikova S.S."/>
            <person name="Totmenin A.V."/>
            <person name="Blinov V.M."/>
            <person name="Chizhikov V.E."/>
            <person name="Gutorov V.V."/>
            <person name="Safronov P.F."/>
            <person name="Pozdnyakov S.G."/>
            <person name="Shelukhina E.M."/>
            <person name="Gashnikov P.V."/>
            <person name="Anjaparidze O.G."/>
            <person name="Sandakhchiev L.S."/>
        </authorList>
    </citation>
    <scope>NUCLEOTIDE SEQUENCE [GENOMIC DNA]</scope>
    <source>
        <strain>India-1967 / Isolate Ind3</strain>
    </source>
</reference>
<reference key="2">
    <citation type="journal article" date="1993" name="FEBS Lett.">
        <title>Genes of variola and vaccinia viruses necessary to overcome the host protective mechanisms.</title>
        <authorList>
            <person name="Shchelkunov S.N."/>
            <person name="Blinov V.M."/>
            <person name="Sandakhchiev L.S."/>
        </authorList>
    </citation>
    <scope>NUCLEOTIDE SEQUENCE [GENOMIC DNA]</scope>
    <source>
        <strain>India-1967 / Isolate Ind3</strain>
    </source>
</reference>
<reference key="3">
    <citation type="journal article" date="2004" name="J. Clin. Microbiol.">
        <title>Real-time PCR system for detection of orthopoxviruses and simultaneous identification of smallpox virus.</title>
        <authorList>
            <person name="Olson V.A."/>
            <person name="Laue T."/>
            <person name="Laker M.T."/>
            <person name="Babkin I.V."/>
            <person name="Drosten C."/>
            <person name="Shchelkunov S.N."/>
            <person name="Niedrig M."/>
            <person name="Damon I.K."/>
            <person name="Meyer H."/>
        </authorList>
    </citation>
    <scope>NUCLEOTIDE SEQUENCE [GENOMIC DNA]</scope>
    <source>
        <strain>6/58 / Isolate S/6</strain>
    </source>
</reference>
<evidence type="ECO:0000250" key="1">
    <source>
        <dbReference type="UniProtKB" id="P11258"/>
    </source>
</evidence>
<evidence type="ECO:0000305" key="2"/>
<protein>
    <recommendedName>
        <fullName>Protein OPG154</fullName>
    </recommendedName>
</protein>
<organism>
    <name type="scientific">Variola virus (isolate Human/India/Ind3/1967)</name>
    <name type="common">VARV</name>
    <name type="synonym">Smallpox virus</name>
    <dbReference type="NCBI Taxonomy" id="587200"/>
    <lineage>
        <taxon>Viruses</taxon>
        <taxon>Varidnaviria</taxon>
        <taxon>Bamfordvirae</taxon>
        <taxon>Nucleocytoviricota</taxon>
        <taxon>Pokkesviricetes</taxon>
        <taxon>Chitovirales</taxon>
        <taxon>Poxviridae</taxon>
        <taxon>Chordopoxvirinae</taxon>
        <taxon>Orthopoxvirus</taxon>
        <taxon>Variola virus</taxon>
    </lineage>
</organism>
<comment type="function">
    <text evidence="1">Structural protein involved in the envelopment of mature virion (MV) to form the wrapped virion (WV). The wrapping consists of the addition of Golgi membranes to the mature virion. Participates in mature virion (MV) movement within the infected cell. May play an indirect role in MV-cell fusion.</text>
</comment>
<comment type="subunit">
    <text evidence="1">Homohexamers, covalently linked. Interacts with OPG144 and OPG153.</text>
</comment>
<comment type="subcellular location">
    <subcellularLocation>
        <location evidence="1">Virion</location>
    </subcellularLocation>
    <text evidence="1">Located to the mature virion membrane via interaction with protein OPG144.</text>
</comment>
<comment type="similarity">
    <text evidence="2">Belongs to the orthopoxvirus OPG154 protein family.</text>
</comment>
<gene>
    <name type="primary">OPG154</name>
    <name type="ORF">A27L</name>
    <name type="ORF">A30L</name>
</gene>
<sequence length="110" mass="12485">MDGTLFPGDDDLAIPATEFFSTKAAKKPEAKREAIVKADGDNNEETLKQRLTNLEKKITNVTTKFEQIEKCCKRNDDVLFRLENHAETLRAAMISLAKKIDVQTGRRPYE</sequence>
<name>PG154_VAR67</name>